<reference key="1">
    <citation type="journal article" date="1987" name="Virology">
        <title>Nucleotide sequence of a radiation leukemia virus genome.</title>
        <authorList>
            <person name="Merregaert J."/>
            <person name="Janowski M."/>
            <person name="Reddy E.P."/>
        </authorList>
    </citation>
    <scope>NUCLEOTIDE SEQUENCE [GENOMIC RNA]</scope>
</reference>
<accession>P11268</accession>
<organism>
    <name type="scientific">Radiation murine leukemia virus</name>
    <dbReference type="NCBI Taxonomy" id="11787"/>
    <lineage>
        <taxon>Viruses</taxon>
        <taxon>Riboviria</taxon>
        <taxon>Pararnavirae</taxon>
        <taxon>Artverviricota</taxon>
        <taxon>Revtraviricetes</taxon>
        <taxon>Ortervirales</taxon>
        <taxon>Retroviridae</taxon>
        <taxon>Orthoretrovirinae</taxon>
        <taxon>Gammaretrovirus</taxon>
        <taxon>Murine leukemia virus</taxon>
    </lineage>
</organism>
<organismHost>
    <name type="scientific">Mus musculus</name>
    <name type="common">Mouse</name>
    <dbReference type="NCBI Taxonomy" id="10090"/>
</organismHost>
<name>ENV_MLVRD</name>
<keyword id="KW-0165">Cleavage on pair of basic residues</keyword>
<keyword id="KW-0175">Coiled coil</keyword>
<keyword id="KW-1015">Disulfide bond</keyword>
<keyword id="KW-1169">Fusion of virus membrane with host cell membrane</keyword>
<keyword id="KW-1168">Fusion of virus membrane with host membrane</keyword>
<keyword id="KW-0325">Glycoprotein</keyword>
<keyword id="KW-1032">Host cell membrane</keyword>
<keyword id="KW-1043">Host membrane</keyword>
<keyword id="KW-0945">Host-virus interaction</keyword>
<keyword id="KW-0449">Lipoprotein</keyword>
<keyword id="KW-0472">Membrane</keyword>
<keyword id="KW-0479">Metal-binding</keyword>
<keyword id="KW-0564">Palmitate</keyword>
<keyword id="KW-0732">Signal</keyword>
<keyword id="KW-0812">Transmembrane</keyword>
<keyword id="KW-1133">Transmembrane helix</keyword>
<keyword id="KW-1161">Viral attachment to host cell</keyword>
<keyword id="KW-0261">Viral envelope protein</keyword>
<keyword id="KW-1162">Viral penetration into host cytoplasm</keyword>
<keyword id="KW-0946">Virion</keyword>
<keyword id="KW-1160">Virus entry into host cell</keyword>
<keyword id="KW-0862">Zinc</keyword>
<evidence type="ECO:0000250" key="1"/>
<evidence type="ECO:0000255" key="2"/>
<evidence type="ECO:0000256" key="3">
    <source>
        <dbReference type="SAM" id="MobiDB-lite"/>
    </source>
</evidence>
<evidence type="ECO:0000305" key="4"/>
<comment type="function">
    <text evidence="1">The surface protein (SU) attaches the virus to the host cell by binding to its receptor. This interaction triggers the refolding of the transmembrane protein (TM) and is thought to activate its fusogenic potential by unmasking its fusion peptide. Fusion occurs at the host cell plasma membrane (By similarity).</text>
</comment>
<comment type="function">
    <text evidence="1">The transmembrane protein (TM) acts as a class I viral fusion protein. Under the current model, the protein has at least 3 conformational states: pre-fusion native state, pre-hairpin intermediate state, and post-fusion hairpin state. During viral and target cell membrane fusion, the coiled coil regions (heptad repeats) assume a trimer-of-hairpins structure, positioning the fusion peptide in close proximity to the C-terminal region of the ectodomain. The formation of this structure appears to drive apposition and subsequent fusion of viral and target cell membranes. Membranes fusion leads to delivery of the nucleocapsid into the cytoplasm (By similarity).</text>
</comment>
<comment type="subunit">
    <text evidence="1">The mature envelope protein (Env) consists of a trimer of SU-TM heterodimers attached by a labile interchain disulfide bond.</text>
</comment>
<comment type="subcellular location">
    <molecule>Transmembrane protein</molecule>
    <subcellularLocation>
        <location evidence="1">Virion membrane</location>
        <topology evidence="1">Single-pass type I membrane protein</topology>
    </subcellularLocation>
    <subcellularLocation>
        <location evidence="1">Host cell membrane</location>
        <topology evidence="1">Single-pass type I membrane protein</topology>
    </subcellularLocation>
</comment>
<comment type="subcellular location">
    <molecule>Surface protein</molecule>
    <subcellularLocation>
        <location>Virion membrane</location>
        <topology>Peripheral membrane protein</topology>
    </subcellularLocation>
    <subcellularLocation>
        <location evidence="1">Host cell membrane</location>
        <topology evidence="1">Peripheral membrane protein</topology>
    </subcellularLocation>
    <text evidence="1">The surface protein is not anchored to the viral envelope, but associates with the virion surface through its binding to TM. Both proteins are thought to be concentrated at the site of budding and incorporated into the virions possibly by contacts between the cytoplasmic tail of Env and the N-terminus of Gag (By similarity).</text>
</comment>
<comment type="subcellular location">
    <molecule>R-peptide</molecule>
    <subcellularLocation>
        <location evidence="1">Host cell membrane</location>
        <topology evidence="1">Peripheral membrane protein</topology>
    </subcellularLocation>
    <text evidence="1">The R-peptide is membrane-associated through its palmitate.</text>
</comment>
<comment type="domain">
    <text>The YXXL motif is involved in determining the exact site of viral release at the surface of infected mononuclear cells and promotes endocytosis.</text>
</comment>
<comment type="domain">
    <text evidence="1">The 17 amino acids long immunosuppressive region is present in many retroviral envelope proteins. Synthetic peptides derived from this relatively conserved sequence inhibit immune function in vitro and in vivo (By similarity).</text>
</comment>
<comment type="PTM">
    <text evidence="1">Specific enzymatic cleavages in vivo yield mature proteins. Envelope glycoproteins are synthesized as an inactive precursor that is N-glycosylated and processed likely by host cell furin or by a furin-like protease in the Golgi to yield the mature SU and TM proteins. The cleavage site between SU and TM requires the minimal sequence [KR]-X-[KR]-R. The R-peptide is released from the C-terminus of the cytoplasmic tail of the TM protein upon particle formation as a result of proteolytic cleavage by the viral protease. Cleavage of this peptide is required for TM to become fusogenic (By similarity).</text>
</comment>
<comment type="PTM">
    <text evidence="1">The CXXC motif is highly conserved across a broad range of retroviral envelope proteins. It is thought to participate in the formation of a labile disulfide bond possibly with the CX6CC motif present in the transmembrane protein. Isomerization of the intersubunit disulfide bond to an SU intrachain disulfide bond is thought to occur upon receptor recognition in order to allow membrane fusion (By similarity).</text>
</comment>
<comment type="PTM">
    <text evidence="1">The transmembrane protein is palmitoylated.</text>
</comment>
<comment type="PTM">
    <text evidence="1">The R-peptide is palmitoylated.</text>
</comment>
<comment type="sequence caution" evidence="4">
    <conflict type="erroneous initiation">
        <sequence resource="EMBL-CDS" id="AAA46519"/>
    </conflict>
</comment>
<proteinExistence type="inferred from homology"/>
<dbReference type="EMBL" id="K03363">
    <property type="protein sequence ID" value="AAA46519.1"/>
    <property type="status" value="ALT_INIT"/>
    <property type="molecule type" value="Genomic_RNA"/>
</dbReference>
<dbReference type="PIR" id="C26183">
    <property type="entry name" value="VCMVVR"/>
</dbReference>
<dbReference type="SMR" id="P11268"/>
<dbReference type="GlyCosmos" id="P11268">
    <property type="glycosylation" value="9 sites, No reported glycans"/>
</dbReference>
<dbReference type="Proteomes" id="UP000007778">
    <property type="component" value="Genome"/>
</dbReference>
<dbReference type="GO" id="GO:0020002">
    <property type="term" value="C:host cell plasma membrane"/>
    <property type="evidence" value="ECO:0007669"/>
    <property type="project" value="UniProtKB-SubCell"/>
</dbReference>
<dbReference type="GO" id="GO:0016020">
    <property type="term" value="C:membrane"/>
    <property type="evidence" value="ECO:0007669"/>
    <property type="project" value="UniProtKB-KW"/>
</dbReference>
<dbReference type="GO" id="GO:0019031">
    <property type="term" value="C:viral envelope"/>
    <property type="evidence" value="ECO:0007669"/>
    <property type="project" value="UniProtKB-KW"/>
</dbReference>
<dbReference type="GO" id="GO:0055036">
    <property type="term" value="C:virion membrane"/>
    <property type="evidence" value="ECO:0007669"/>
    <property type="project" value="UniProtKB-SubCell"/>
</dbReference>
<dbReference type="GO" id="GO:0046872">
    <property type="term" value="F:metal ion binding"/>
    <property type="evidence" value="ECO:0007669"/>
    <property type="project" value="UniProtKB-KW"/>
</dbReference>
<dbReference type="GO" id="GO:0019064">
    <property type="term" value="P:fusion of virus membrane with host plasma membrane"/>
    <property type="evidence" value="ECO:0007669"/>
    <property type="project" value="UniProtKB-KW"/>
</dbReference>
<dbReference type="GO" id="GO:0046718">
    <property type="term" value="P:symbiont entry into host cell"/>
    <property type="evidence" value="ECO:0007669"/>
    <property type="project" value="UniProtKB-KW"/>
</dbReference>
<dbReference type="GO" id="GO:0019062">
    <property type="term" value="P:virion attachment to host cell"/>
    <property type="evidence" value="ECO:0007669"/>
    <property type="project" value="UniProtKB-KW"/>
</dbReference>
<dbReference type="CDD" id="cd09851">
    <property type="entry name" value="HTLV-1-like_HR1-HR2"/>
    <property type="match status" value="1"/>
</dbReference>
<dbReference type="Gene3D" id="1.10.287.210">
    <property type="match status" value="1"/>
</dbReference>
<dbReference type="Gene3D" id="3.90.310.10">
    <property type="entry name" value="ENV polyprotein, receptor-binding domain"/>
    <property type="match status" value="1"/>
</dbReference>
<dbReference type="InterPro" id="IPR008981">
    <property type="entry name" value="FMuLV_rcpt-bd"/>
</dbReference>
<dbReference type="InterPro" id="IPR018154">
    <property type="entry name" value="TLV/ENV_coat_polyprotein"/>
</dbReference>
<dbReference type="PANTHER" id="PTHR10424:SF72">
    <property type="entry name" value="BC035947 PROTEIN-RELATED"/>
    <property type="match status" value="1"/>
</dbReference>
<dbReference type="PANTHER" id="PTHR10424">
    <property type="entry name" value="VIRAL ENVELOPE PROTEIN"/>
    <property type="match status" value="1"/>
</dbReference>
<dbReference type="Pfam" id="PF00429">
    <property type="entry name" value="TLV_coat"/>
    <property type="match status" value="1"/>
</dbReference>
<dbReference type="SUPFAM" id="SSF49830">
    <property type="entry name" value="ENV polyprotein, receptor-binding domain"/>
    <property type="match status" value="1"/>
</dbReference>
<dbReference type="SUPFAM" id="SSF58069">
    <property type="entry name" value="Virus ectodomain"/>
    <property type="match status" value="1"/>
</dbReference>
<gene>
    <name type="primary">env</name>
</gene>
<sequence length="665" mass="73083">MESTTLSKPFKNQVNPWGPLIVLLILGRVNPVALGNSPHQVFNLSWEVTNEDRETVWAITGNHPLWTWWPDLTPDLCMLALHGPSYWGLEYQAPFSPPPGPPCCSGSSGSTPGCSRDCEEPLTSYTPRCNTAWNRLKLSKVTHAHNEGFYVCPGPHRPRWARSCGGPESFYCASWGCETTGRASWKPSSSWDYITVSNNLTSGQATPVCKNNTWCNSLTIRFTSLGKQATSWVTGHWWGLRLYVSGHDPGLIFGIRLKITDSGPRVPIGPNPVLSDQRPPSQPRSPPHSNSTPTETPLTLPEPPPAGVENRLLNLVKGAYQALNLTSPDRTQECWLCLVSGPPYYEGVAVLGTYSNHTSAPANCSVALQHKLTLSEVTGQGLCVGAVPKTHQALCNTTQNTSGGSYYLAAPAGTIWACNTGLTPCLSTTVLNLTTDYCVLVELWPRVTYHSPSYVYHQFERRGKYKREPVSLTLALLLGGLTMGGIAAGIGTGTTALVATQQLQAAVHDDLKEVEKSITNLEKSLTSLSEVVLQNRRGLDLLFLKEGGLCAALKEECCFYADHTGVVRDSMAKLRERLNQRQKLFESGQGWFERLFNGSPWFTTLISTIMGPLIVLLLILLLGPCILNRLVQFVKDRISVVQALVLTQQYHQLKSIDPEEMESRE</sequence>
<feature type="signal peptide" evidence="2">
    <location>
        <begin position="1"/>
        <end position="31"/>
    </location>
</feature>
<feature type="chain" id="PRO_0000239590" description="Envelope glycoprotein">
    <location>
        <begin position="32"/>
        <end position="665"/>
    </location>
</feature>
<feature type="chain" id="PRO_0000040771" description="Surface protein" evidence="1">
    <location>
        <begin position="32"/>
        <end position="467"/>
    </location>
</feature>
<feature type="chain" id="PRO_0000040772" description="Transmembrane protein" evidence="1">
    <location>
        <begin position="468"/>
        <end position="644"/>
    </location>
</feature>
<feature type="peptide" id="PRO_0000040773" description="R-peptide" evidence="1">
    <location>
        <begin position="645"/>
        <end position="665"/>
    </location>
</feature>
<feature type="topological domain" description="Extracellular" evidence="2">
    <location>
        <begin position="32"/>
        <end position="605"/>
    </location>
</feature>
<feature type="transmembrane region" description="Helical" evidence="2">
    <location>
        <begin position="606"/>
        <end position="626"/>
    </location>
</feature>
<feature type="topological domain" description="Cytoplasmic" evidence="2">
    <location>
        <begin position="627"/>
        <end position="665"/>
    </location>
</feature>
<feature type="region of interest" description="Receptor-binding domain (RBD)" evidence="2">
    <location>
        <begin position="32"/>
        <end position="267"/>
    </location>
</feature>
<feature type="region of interest" description="Disordered" evidence="3">
    <location>
        <begin position="266"/>
        <end position="307"/>
    </location>
</feature>
<feature type="region of interest" description="Fusion peptide" evidence="1">
    <location>
        <begin position="470"/>
        <end position="490"/>
    </location>
</feature>
<feature type="region of interest" description="Immunosuppression" evidence="1">
    <location>
        <begin position="533"/>
        <end position="549"/>
    </location>
</feature>
<feature type="coiled-coil region" evidence="2">
    <location>
        <begin position="505"/>
        <end position="532"/>
    </location>
</feature>
<feature type="short sequence motif" description="CXXC">
    <location>
        <begin position="334"/>
        <end position="337"/>
    </location>
</feature>
<feature type="short sequence motif" description="CX6CC">
    <location>
        <begin position="550"/>
        <end position="558"/>
    </location>
</feature>
<feature type="short sequence motif" description="YXXL motif; contains endocytosis signal" evidence="1">
    <location>
        <begin position="650"/>
        <end position="653"/>
    </location>
</feature>
<feature type="binding site" evidence="1">
    <location>
        <position position="117"/>
    </location>
    <ligand>
        <name>Zn(2+)</name>
        <dbReference type="ChEBI" id="CHEBI:29105"/>
    </ligand>
</feature>
<feature type="site" description="Cleavage; by host" evidence="1">
    <location>
        <begin position="467"/>
        <end position="468"/>
    </location>
</feature>
<feature type="site" description="Cleavage; by viral protease p14" evidence="1">
    <location>
        <begin position="644"/>
        <end position="645"/>
    </location>
</feature>
<feature type="lipid moiety-binding region" description="S-palmitoyl cysteine; by host" evidence="1">
    <location>
        <position position="625"/>
    </location>
</feature>
<feature type="glycosylation site" description="N-linked (GlcNAc...) asparagine; by host" evidence="1">
    <location>
        <position position="43"/>
    </location>
</feature>
<feature type="glycosylation site" description="N-linked (GlcNAc...) asparagine; by host" evidence="1">
    <location>
        <position position="199"/>
    </location>
</feature>
<feature type="glycosylation site" description="N-linked (GlcNAc...) asparagine; by host" evidence="2">
    <location>
        <position position="211"/>
    </location>
</feature>
<feature type="glycosylation site" description="N-linked (GlcNAc...) asparagine; by host" evidence="1">
    <location>
        <position position="324"/>
    </location>
</feature>
<feature type="glycosylation site" description="N-linked (GlcNAc...) asparagine; by host" evidence="2">
    <location>
        <position position="356"/>
    </location>
</feature>
<feature type="glycosylation site" description="N-linked (GlcNAc...) asparagine; by host" evidence="2">
    <location>
        <position position="363"/>
    </location>
</feature>
<feature type="glycosylation site" description="N-linked (GlcNAc...) asparagine; by host" evidence="2">
    <location>
        <position position="396"/>
    </location>
</feature>
<feature type="glycosylation site" description="N-linked (GlcNAc...) asparagine; by host" evidence="2">
    <location>
        <position position="400"/>
    </location>
</feature>
<feature type="glycosylation site" description="N-linked (GlcNAc...) asparagine; by host" evidence="2">
    <location>
        <position position="432"/>
    </location>
</feature>
<feature type="disulfide bond" evidence="1">
    <location>
        <begin position="77"/>
        <end position="129"/>
    </location>
</feature>
<feature type="disulfide bond" evidence="1">
    <location>
        <begin position="103"/>
        <end position="118"/>
    </location>
</feature>
<feature type="disulfide bond" evidence="1">
    <location>
        <begin position="104"/>
        <end position="114"/>
    </location>
</feature>
<feature type="disulfide bond" evidence="1">
    <location>
        <begin position="152"/>
        <end position="172"/>
    </location>
</feature>
<feature type="disulfide bond" evidence="1">
    <location>
        <begin position="164"/>
        <end position="177"/>
    </location>
</feature>
<feature type="disulfide bond" evidence="1">
    <location>
        <begin position="209"/>
        <end position="215"/>
    </location>
</feature>
<feature type="disulfide bond" description="Interchain (between SU and TM chains, or C-337 with C-558); in linked form" evidence="1">
    <location>
        <begin position="334"/>
        <end position="558"/>
    </location>
</feature>
<feature type="disulfide bond" evidence="1">
    <location>
        <begin position="334"/>
        <end position="337"/>
    </location>
</feature>
<feature type="disulfide bond" evidence="1">
    <location>
        <begin position="364"/>
        <end position="418"/>
    </location>
</feature>
<feature type="disulfide bond" evidence="1">
    <location>
        <begin position="383"/>
        <end position="395"/>
    </location>
</feature>
<feature type="disulfide bond" evidence="1">
    <location>
        <begin position="425"/>
        <end position="438"/>
    </location>
</feature>
<feature type="disulfide bond" evidence="1">
    <location>
        <begin position="550"/>
        <end position="557"/>
    </location>
</feature>
<protein>
    <recommendedName>
        <fullName>Envelope glycoprotein</fullName>
    </recommendedName>
    <alternativeName>
        <fullName>Env polyprotein</fullName>
    </alternativeName>
    <component>
        <recommendedName>
            <fullName>Surface protein</fullName>
            <shortName>SU</shortName>
        </recommendedName>
        <alternativeName>
            <fullName>Glycoprotein 76</fullName>
            <shortName>gp76</shortName>
        </alternativeName>
    </component>
    <component>
        <recommendedName>
            <fullName>Transmembrane protein</fullName>
            <shortName>TM</shortName>
        </recommendedName>
        <alternativeName>
            <fullName>Envelope protein p15E</fullName>
        </alternativeName>
    </component>
    <component>
        <recommendedName>
            <fullName>R-peptide</fullName>
        </recommendedName>
        <alternativeName>
            <fullName>p2E</fullName>
        </alternativeName>
    </component>
</protein>